<proteinExistence type="inferred from homology"/>
<comment type="function">
    <text evidence="1">Catalyzes the tRNA-independent activation of glutamate in presence of ATP and the subsequent transfer of glutamate onto a tRNA(Asp). Glutamate is transferred on the 2-amino-5-(4,5-dihydroxy-2-cyclopenten-1-yl) moiety of the queuosine in the wobble position of the QUC anticodon.</text>
</comment>
<comment type="cofactor">
    <cofactor evidence="1">
        <name>Zn(2+)</name>
        <dbReference type="ChEBI" id="CHEBI:29105"/>
    </cofactor>
    <text evidence="1">Binds 1 zinc ion per subunit.</text>
</comment>
<comment type="similarity">
    <text evidence="1">Belongs to the class-I aminoacyl-tRNA synthetase family. GluQ subfamily.</text>
</comment>
<comment type="caution">
    <text evidence="2">Lacks the conserved Tyr, which is one of four residues to bind the zinc atom.</text>
</comment>
<keyword id="KW-0030">Aminoacyl-tRNA synthetase</keyword>
<keyword id="KW-0067">ATP-binding</keyword>
<keyword id="KW-0436">Ligase</keyword>
<keyword id="KW-0479">Metal-binding</keyword>
<keyword id="KW-0547">Nucleotide-binding</keyword>
<keyword id="KW-0862">Zinc</keyword>
<gene>
    <name evidence="1" type="primary">gluQ</name>
    <name type="ordered locus">XC_1822</name>
</gene>
<dbReference type="EC" id="6.1.1.-" evidence="1"/>
<dbReference type="EMBL" id="CP000050">
    <property type="protein sequence ID" value="AAY48885.1"/>
    <property type="molecule type" value="Genomic_DNA"/>
</dbReference>
<dbReference type="SMR" id="Q4UVN8"/>
<dbReference type="KEGG" id="xcb:XC_1822"/>
<dbReference type="HOGENOM" id="CLU_015768_0_1_6"/>
<dbReference type="Proteomes" id="UP000000420">
    <property type="component" value="Chromosome"/>
</dbReference>
<dbReference type="GO" id="GO:0005829">
    <property type="term" value="C:cytosol"/>
    <property type="evidence" value="ECO:0007669"/>
    <property type="project" value="TreeGrafter"/>
</dbReference>
<dbReference type="GO" id="GO:0005524">
    <property type="term" value="F:ATP binding"/>
    <property type="evidence" value="ECO:0007669"/>
    <property type="project" value="UniProtKB-KW"/>
</dbReference>
<dbReference type="GO" id="GO:0004818">
    <property type="term" value="F:glutamate-tRNA ligase activity"/>
    <property type="evidence" value="ECO:0007669"/>
    <property type="project" value="TreeGrafter"/>
</dbReference>
<dbReference type="GO" id="GO:0008270">
    <property type="term" value="F:zinc ion binding"/>
    <property type="evidence" value="ECO:0007669"/>
    <property type="project" value="InterPro"/>
</dbReference>
<dbReference type="GO" id="GO:0006424">
    <property type="term" value="P:glutamyl-tRNA aminoacylation"/>
    <property type="evidence" value="ECO:0007669"/>
    <property type="project" value="InterPro"/>
</dbReference>
<dbReference type="GO" id="GO:0006400">
    <property type="term" value="P:tRNA modification"/>
    <property type="evidence" value="ECO:0007669"/>
    <property type="project" value="InterPro"/>
</dbReference>
<dbReference type="Gene3D" id="3.40.50.620">
    <property type="entry name" value="HUPs"/>
    <property type="match status" value="1"/>
</dbReference>
<dbReference type="HAMAP" id="MF_01428">
    <property type="entry name" value="Glu_Q_tRNA_synth"/>
    <property type="match status" value="1"/>
</dbReference>
<dbReference type="InterPro" id="IPR022380">
    <property type="entry name" value="Glu-Q_tRNA(Asp)_Synthase"/>
</dbReference>
<dbReference type="InterPro" id="IPR000924">
    <property type="entry name" value="Glu/Gln-tRNA-synth"/>
</dbReference>
<dbReference type="InterPro" id="IPR020058">
    <property type="entry name" value="Glu/Gln-tRNA-synth_Ib_cat-dom"/>
</dbReference>
<dbReference type="InterPro" id="IPR049940">
    <property type="entry name" value="GluQ/Sye"/>
</dbReference>
<dbReference type="InterPro" id="IPR014729">
    <property type="entry name" value="Rossmann-like_a/b/a_fold"/>
</dbReference>
<dbReference type="NCBIfam" id="NF004314">
    <property type="entry name" value="PRK05710.1-3"/>
    <property type="match status" value="1"/>
</dbReference>
<dbReference type="NCBIfam" id="TIGR03838">
    <property type="entry name" value="queuosine_YadB"/>
    <property type="match status" value="1"/>
</dbReference>
<dbReference type="PANTHER" id="PTHR43311">
    <property type="entry name" value="GLUTAMATE--TRNA LIGASE"/>
    <property type="match status" value="1"/>
</dbReference>
<dbReference type="PANTHER" id="PTHR43311:SF1">
    <property type="entry name" value="GLUTAMYL-Q TRNA(ASP) SYNTHETASE"/>
    <property type="match status" value="1"/>
</dbReference>
<dbReference type="Pfam" id="PF00749">
    <property type="entry name" value="tRNA-synt_1c"/>
    <property type="match status" value="2"/>
</dbReference>
<dbReference type="PRINTS" id="PR00987">
    <property type="entry name" value="TRNASYNTHGLU"/>
</dbReference>
<dbReference type="SUPFAM" id="SSF52374">
    <property type="entry name" value="Nucleotidylyl transferase"/>
    <property type="match status" value="1"/>
</dbReference>
<sequence length="297" mass="31771">MSSLPYRGRFAPSPTGPLHFGSLLAALGSWLLARHAGGEWHVRIEDIDPPRAEPGASERQLHTLAAFGLHSDGPVLYQSDRDAYYEAALSRLLRSGAAFECSCSRAELAAMGGIHHVCVAPLGIRRAVRLRVPPNTQASFQDALQGRITQDVYSEVGDVVLRRADGYWAYQLAVVVDDAAQGITDVVRGADLLDSTPRQLVLQQALGVAPPRYLHLPLILGADGRKLSKSHAAQPVDDSDPLPALRAAWRALGQAPAALPARASVAGVLQHAVQHFSPQRLPRVASLDAATRIDAPA</sequence>
<accession>Q4UVN8</accession>
<reference key="1">
    <citation type="journal article" date="2005" name="Genome Res.">
        <title>Comparative and functional genomic analyses of the pathogenicity of phytopathogen Xanthomonas campestris pv. campestris.</title>
        <authorList>
            <person name="Qian W."/>
            <person name="Jia Y."/>
            <person name="Ren S.-X."/>
            <person name="He Y.-Q."/>
            <person name="Feng J.-X."/>
            <person name="Lu L.-F."/>
            <person name="Sun Q."/>
            <person name="Ying G."/>
            <person name="Tang D.-J."/>
            <person name="Tang H."/>
            <person name="Wu W."/>
            <person name="Hao P."/>
            <person name="Wang L."/>
            <person name="Jiang B.-L."/>
            <person name="Zeng S."/>
            <person name="Gu W.-Y."/>
            <person name="Lu G."/>
            <person name="Rong L."/>
            <person name="Tian Y."/>
            <person name="Yao Z."/>
            <person name="Fu G."/>
            <person name="Chen B."/>
            <person name="Fang R."/>
            <person name="Qiang B."/>
            <person name="Chen Z."/>
            <person name="Zhao G.-P."/>
            <person name="Tang J.-L."/>
            <person name="He C."/>
        </authorList>
    </citation>
    <scope>NUCLEOTIDE SEQUENCE [LARGE SCALE GENOMIC DNA]</scope>
    <source>
        <strain>8004</strain>
    </source>
</reference>
<evidence type="ECO:0000255" key="1">
    <source>
        <dbReference type="HAMAP-Rule" id="MF_01428"/>
    </source>
</evidence>
<evidence type="ECO:0000305" key="2"/>
<organism>
    <name type="scientific">Xanthomonas campestris pv. campestris (strain 8004)</name>
    <dbReference type="NCBI Taxonomy" id="314565"/>
    <lineage>
        <taxon>Bacteria</taxon>
        <taxon>Pseudomonadati</taxon>
        <taxon>Pseudomonadota</taxon>
        <taxon>Gammaproteobacteria</taxon>
        <taxon>Lysobacterales</taxon>
        <taxon>Lysobacteraceae</taxon>
        <taxon>Xanthomonas</taxon>
    </lineage>
</organism>
<protein>
    <recommendedName>
        <fullName evidence="1">Glutamyl-Q tRNA(Asp) synthetase</fullName>
        <shortName evidence="1">Glu-Q-RSs</shortName>
        <ecNumber evidence="1">6.1.1.-</ecNumber>
    </recommendedName>
</protein>
<name>GLUQ_XANC8</name>
<feature type="chain" id="PRO_0000208337" description="Glutamyl-Q tRNA(Asp) synthetase">
    <location>
        <begin position="1"/>
        <end position="297"/>
    </location>
</feature>
<feature type="short sequence motif" description="'HIGH' region">
    <location>
        <begin position="12"/>
        <end position="22"/>
    </location>
</feature>
<feature type="short sequence motif" description="'KMSKS' region">
    <location>
        <begin position="226"/>
        <end position="230"/>
    </location>
</feature>
<feature type="binding site" evidence="1">
    <location>
        <begin position="9"/>
        <end position="13"/>
    </location>
    <ligand>
        <name>L-glutamate</name>
        <dbReference type="ChEBI" id="CHEBI:29985"/>
    </ligand>
</feature>
<feature type="binding site" evidence="1">
    <location>
        <position position="45"/>
    </location>
    <ligand>
        <name>L-glutamate</name>
        <dbReference type="ChEBI" id="CHEBI:29985"/>
    </ligand>
</feature>
<feature type="binding site" evidence="1">
    <location>
        <position position="101"/>
    </location>
    <ligand>
        <name>Zn(2+)</name>
        <dbReference type="ChEBI" id="CHEBI:29105"/>
    </ligand>
</feature>
<feature type="binding site" evidence="1">
    <location>
        <position position="103"/>
    </location>
    <ligand>
        <name>Zn(2+)</name>
        <dbReference type="ChEBI" id="CHEBI:29105"/>
    </ligand>
</feature>
<feature type="binding site" evidence="1">
    <location>
        <position position="118"/>
    </location>
    <ligand>
        <name>Zn(2+)</name>
        <dbReference type="ChEBI" id="CHEBI:29105"/>
    </ligand>
</feature>
<feature type="binding site" evidence="1">
    <location>
        <position position="170"/>
    </location>
    <ligand>
        <name>L-glutamate</name>
        <dbReference type="ChEBI" id="CHEBI:29985"/>
    </ligand>
</feature>
<feature type="binding site" evidence="1">
    <location>
        <position position="188"/>
    </location>
    <ligand>
        <name>L-glutamate</name>
        <dbReference type="ChEBI" id="CHEBI:29985"/>
    </ligand>
</feature>
<feature type="binding site" evidence="1">
    <location>
        <position position="229"/>
    </location>
    <ligand>
        <name>ATP</name>
        <dbReference type="ChEBI" id="CHEBI:30616"/>
    </ligand>
</feature>